<feature type="chain" id="PRO_0000101354" description="Uncharacterized protein RP362">
    <location>
        <begin position="1"/>
        <end position="83"/>
    </location>
</feature>
<keyword id="KW-1185">Reference proteome</keyword>
<proteinExistence type="predicted"/>
<name>Y362_RICPR</name>
<accession>Q9ZDG7</accession>
<reference key="1">
    <citation type="journal article" date="1998" name="Nature">
        <title>The genome sequence of Rickettsia prowazekii and the origin of mitochondria.</title>
        <authorList>
            <person name="Andersson S.G.E."/>
            <person name="Zomorodipour A."/>
            <person name="Andersson J.O."/>
            <person name="Sicheritz-Ponten T."/>
            <person name="Alsmark U.C.M."/>
            <person name="Podowski R.M."/>
            <person name="Naeslund A.K."/>
            <person name="Eriksson A.-S."/>
            <person name="Winkler H.H."/>
            <person name="Kurland C.G."/>
        </authorList>
    </citation>
    <scope>NUCLEOTIDE SEQUENCE [LARGE SCALE GENOMIC DNA]</scope>
    <source>
        <strain>Madrid E</strain>
    </source>
</reference>
<protein>
    <recommendedName>
        <fullName>Uncharacterized protein RP362</fullName>
    </recommendedName>
</protein>
<gene>
    <name type="ordered locus">RP362</name>
</gene>
<dbReference type="EMBL" id="AJ235271">
    <property type="protein sequence ID" value="CAA14821.1"/>
    <property type="molecule type" value="Genomic_DNA"/>
</dbReference>
<dbReference type="PIR" id="C71693">
    <property type="entry name" value="C71693"/>
</dbReference>
<dbReference type="RefSeq" id="WP_004599426.1">
    <property type="nucleotide sequence ID" value="NC_000963.1"/>
</dbReference>
<dbReference type="SMR" id="Q9ZDG7"/>
<dbReference type="STRING" id="272947.gene:17555442"/>
<dbReference type="EnsemblBacteria" id="CAA14821">
    <property type="protein sequence ID" value="CAA14821"/>
    <property type="gene ID" value="CAA14821"/>
</dbReference>
<dbReference type="KEGG" id="rpr:RP362"/>
<dbReference type="HOGENOM" id="CLU_2540441_0_0_5"/>
<dbReference type="Proteomes" id="UP000002480">
    <property type="component" value="Chromosome"/>
</dbReference>
<organism>
    <name type="scientific">Rickettsia prowazekii (strain Madrid E)</name>
    <dbReference type="NCBI Taxonomy" id="272947"/>
    <lineage>
        <taxon>Bacteria</taxon>
        <taxon>Pseudomonadati</taxon>
        <taxon>Pseudomonadota</taxon>
        <taxon>Alphaproteobacteria</taxon>
        <taxon>Rickettsiales</taxon>
        <taxon>Rickettsiaceae</taxon>
        <taxon>Rickettsieae</taxon>
        <taxon>Rickettsia</taxon>
        <taxon>typhus group</taxon>
    </lineage>
</organism>
<sequence>MKLKEKMFSCICKPSTIDQSSTTEKYLRFEKKRVGRFNICTVLSNKNLEKAGNFTVIQNVDNEDKIFIIRIINNILQKKNYIR</sequence>